<protein>
    <recommendedName>
        <fullName>Sulfhydryl oxidase 1</fullName>
        <shortName>mSOx</shortName>
        <ecNumber evidence="10">1.8.3.2</ecNumber>
    </recommendedName>
    <alternativeName>
        <fullName>Quiescin Q6</fullName>
    </alternativeName>
    <alternativeName>
        <fullName>Skin sulfhydryl oxidase</fullName>
    </alternativeName>
</protein>
<feature type="signal peptide" evidence="4">
    <location>
        <begin position="1"/>
        <end position="32"/>
    </location>
</feature>
<feature type="chain" id="PRO_0000249534" description="Sulfhydryl oxidase 1">
    <location>
        <begin position="33"/>
        <end position="748"/>
    </location>
</feature>
<feature type="transmembrane region" description="Helical" evidence="4">
    <location>
        <begin position="711"/>
        <end position="731"/>
    </location>
</feature>
<feature type="domain" description="Thioredoxin" evidence="6">
    <location>
        <begin position="33"/>
        <end position="159"/>
    </location>
</feature>
<feature type="domain" description="ERV/ALR sulfhydryl oxidase" evidence="5">
    <location>
        <begin position="399"/>
        <end position="506"/>
    </location>
</feature>
<feature type="region of interest" description="Disordered" evidence="7">
    <location>
        <begin position="581"/>
        <end position="647"/>
    </location>
</feature>
<feature type="compositionally biased region" description="Basic and acidic residues" evidence="7">
    <location>
        <begin position="628"/>
        <end position="638"/>
    </location>
</feature>
<feature type="active site" description="Nucleophile" evidence="1">
    <location>
        <position position="73"/>
    </location>
</feature>
<feature type="active site" description="Nucleophile" evidence="1">
    <location>
        <position position="76"/>
    </location>
</feature>
<feature type="binding site" evidence="9 16 17">
    <location>
        <position position="404"/>
    </location>
    <ligand>
        <name>FAD</name>
        <dbReference type="ChEBI" id="CHEBI:57692"/>
    </ligand>
</feature>
<feature type="binding site" evidence="9 16 17">
    <location>
        <position position="411"/>
    </location>
    <ligand>
        <name>FAD</name>
        <dbReference type="ChEBI" id="CHEBI:57692"/>
    </ligand>
</feature>
<feature type="binding site" evidence="9 16 17">
    <location>
        <position position="415"/>
    </location>
    <ligand>
        <name>FAD</name>
        <dbReference type="ChEBI" id="CHEBI:57692"/>
    </ligand>
</feature>
<feature type="binding site" evidence="2">
    <location>
        <position position="454"/>
    </location>
    <ligand>
        <name>FAD</name>
        <dbReference type="ChEBI" id="CHEBI:57692"/>
    </ligand>
</feature>
<feature type="binding site" evidence="2">
    <location>
        <position position="458"/>
    </location>
    <ligand>
        <name>FAD</name>
        <dbReference type="ChEBI" id="CHEBI:57692"/>
    </ligand>
</feature>
<feature type="binding site" evidence="9 16 17">
    <location>
        <begin position="481"/>
        <end position="488"/>
    </location>
    <ligand>
        <name>FAD</name>
        <dbReference type="ChEBI" id="CHEBI:57692"/>
    </ligand>
</feature>
<feature type="binding site" evidence="9 16 17">
    <location>
        <position position="503"/>
    </location>
    <ligand>
        <name>FAD</name>
        <dbReference type="ChEBI" id="CHEBI:57692"/>
    </ligand>
</feature>
<feature type="binding site" evidence="9 16 17">
    <location>
        <position position="506"/>
    </location>
    <ligand>
        <name>FAD</name>
        <dbReference type="ChEBI" id="CHEBI:57692"/>
    </ligand>
</feature>
<feature type="glycosylation site" description="N-linked (GlcNAc...) asparagine" evidence="4">
    <location>
        <position position="133"/>
    </location>
</feature>
<feature type="glycosylation site" description="N-linked (GlcNAc...) asparagine" evidence="4">
    <location>
        <position position="246"/>
    </location>
</feature>
<feature type="disulfide bond" description="Redox-active" evidence="5 6 9 18 19 20">
    <location>
        <begin position="73"/>
        <end position="76"/>
    </location>
</feature>
<feature type="disulfide bond" evidence="9 10 16 17 18 19 20">
    <location>
        <begin position="104"/>
        <end position="113"/>
    </location>
</feature>
<feature type="disulfide bond" evidence="5 9 16 17">
    <location>
        <begin position="396"/>
        <end position="408"/>
    </location>
</feature>
<feature type="disulfide bond" evidence="5">
    <location>
        <begin position="452"/>
        <end position="455"/>
    </location>
</feature>
<feature type="disulfide bond" evidence="5 9 16 17">
    <location>
        <begin position="512"/>
        <end position="515"/>
    </location>
</feature>
<feature type="splice variant" id="VSP_020491" description="In isoform 4." evidence="14">
    <original>FFQAFTKNGSGATLPGAGANVQTLRMRLI</original>
    <variation>VCEGGATVEWFWPSTQSSVPHFPGTFLGC</variation>
    <location>
        <begin position="126"/>
        <end position="154"/>
    </location>
</feature>
<feature type="splice variant" id="VSP_020492" description="In isoform 4." evidence="14">
    <location>
        <begin position="155"/>
        <end position="748"/>
    </location>
</feature>
<feature type="splice variant" id="VSP_020493" description="In isoform 3." evidence="12 13 14">
    <original>VM</original>
    <variation>LL</variation>
    <location>
        <begin position="567"/>
        <end position="568"/>
    </location>
</feature>
<feature type="splice variant" id="VSP_020494" description="In isoform 3." evidence="12 13 14">
    <location>
        <begin position="569"/>
        <end position="748"/>
    </location>
</feature>
<feature type="splice variant" id="VSP_020495" description="In isoform 2." evidence="14">
    <original>VN</original>
    <variation>LL</variation>
    <location>
        <begin position="660"/>
        <end position="661"/>
    </location>
</feature>
<feature type="splice variant" id="VSP_020496" description="In isoform 2." evidence="14">
    <location>
        <begin position="662"/>
        <end position="748"/>
    </location>
</feature>
<feature type="mutagenesis site" description="Causes local perturbations of protein folding; when associated with T-122." evidence="11">
    <original>H</original>
    <variation>A</variation>
    <location>
        <position position="75"/>
    </location>
</feature>
<feature type="mutagenesis site" description="Causes local perturbations of protein folding; when associated with T-122." evidence="11">
    <original>P</original>
    <variation>T</variation>
    <location>
        <position position="122"/>
    </location>
</feature>
<feature type="sequence conflict" description="In Ref. 2; BAE41429." evidence="15" ref="2">
    <original>M</original>
    <variation>I</variation>
    <location>
        <position position="637"/>
    </location>
</feature>
<feature type="sequence conflict" description="In Ref. 2; BAE41429." evidence="15" ref="2">
    <original>F</original>
    <variation>L</variation>
    <location>
        <position position="656"/>
    </location>
</feature>
<feature type="strand" evidence="24">
    <location>
        <begin position="43"/>
        <end position="48"/>
    </location>
</feature>
<feature type="turn" evidence="24">
    <location>
        <begin position="50"/>
        <end position="52"/>
    </location>
</feature>
<feature type="helix" evidence="24">
    <location>
        <begin position="53"/>
        <end position="57"/>
    </location>
</feature>
<feature type="strand" evidence="24">
    <location>
        <begin position="61"/>
        <end position="69"/>
    </location>
</feature>
<feature type="helix" evidence="24">
    <location>
        <begin position="74"/>
        <end position="89"/>
    </location>
</feature>
<feature type="helix" evidence="24">
    <location>
        <begin position="91"/>
        <end position="93"/>
    </location>
</feature>
<feature type="turn" evidence="24">
    <location>
        <begin position="94"/>
        <end position="96"/>
    </location>
</feature>
<feature type="strand" evidence="24">
    <location>
        <begin position="97"/>
        <end position="103"/>
    </location>
</feature>
<feature type="helix" evidence="24">
    <location>
        <begin position="107"/>
        <end position="109"/>
    </location>
</feature>
<feature type="helix" evidence="24">
    <location>
        <begin position="110"/>
        <end position="115"/>
    </location>
</feature>
<feature type="strand" evidence="24">
    <location>
        <begin position="123"/>
        <end position="127"/>
    </location>
</feature>
<feature type="strand" evidence="23">
    <location>
        <begin position="133"/>
        <end position="135"/>
    </location>
</feature>
<feature type="strand" evidence="24">
    <location>
        <begin position="137"/>
        <end position="139"/>
    </location>
</feature>
<feature type="helix" evidence="24">
    <location>
        <begin position="146"/>
        <end position="158"/>
    </location>
</feature>
<feature type="turn" evidence="23">
    <location>
        <begin position="160"/>
        <end position="162"/>
    </location>
</feature>
<feature type="helix" evidence="24">
    <location>
        <begin position="176"/>
        <end position="179"/>
    </location>
</feature>
<feature type="helix" evidence="24">
    <location>
        <begin position="182"/>
        <end position="185"/>
    </location>
</feature>
<feature type="strand" evidence="24">
    <location>
        <begin position="189"/>
        <end position="196"/>
    </location>
</feature>
<feature type="helix" evidence="24">
    <location>
        <begin position="202"/>
        <end position="209"/>
    </location>
</feature>
<feature type="turn" evidence="24">
    <location>
        <begin position="210"/>
        <end position="212"/>
    </location>
</feature>
<feature type="strand" evidence="24">
    <location>
        <begin position="216"/>
        <end position="222"/>
    </location>
</feature>
<feature type="helix" evidence="24">
    <location>
        <begin position="226"/>
        <end position="232"/>
    </location>
</feature>
<feature type="strand" evidence="24">
    <location>
        <begin position="236"/>
        <end position="244"/>
    </location>
</feature>
<feature type="strand" evidence="24">
    <location>
        <begin position="249"/>
        <end position="251"/>
    </location>
</feature>
<feature type="helix" evidence="24">
    <location>
        <begin position="259"/>
        <end position="267"/>
    </location>
</feature>
<feature type="strand" evidence="24">
    <location>
        <begin position="269"/>
        <end position="271"/>
    </location>
</feature>
<feature type="helix" evidence="21">
    <location>
        <begin position="293"/>
        <end position="296"/>
    </location>
</feature>
<feature type="strand" evidence="22">
    <location>
        <begin position="301"/>
        <end position="303"/>
    </location>
</feature>
<feature type="helix" evidence="21">
    <location>
        <begin position="304"/>
        <end position="316"/>
    </location>
</feature>
<feature type="helix" evidence="21">
    <location>
        <begin position="319"/>
        <end position="321"/>
    </location>
</feature>
<feature type="strand" evidence="21">
    <location>
        <begin position="323"/>
        <end position="326"/>
    </location>
</feature>
<feature type="helix" evidence="21">
    <location>
        <begin position="327"/>
        <end position="343"/>
    </location>
</feature>
<feature type="helix" evidence="21">
    <location>
        <begin position="348"/>
        <end position="363"/>
    </location>
</feature>
<feature type="strand" evidence="21">
    <location>
        <begin position="367"/>
        <end position="370"/>
    </location>
</feature>
<feature type="helix" evidence="21">
    <location>
        <begin position="371"/>
        <end position="380"/>
    </location>
</feature>
<feature type="helix" evidence="21">
    <location>
        <begin position="383"/>
        <end position="386"/>
    </location>
</feature>
<feature type="strand" evidence="21">
    <location>
        <begin position="403"/>
        <end position="405"/>
    </location>
</feature>
<feature type="helix" evidence="21">
    <location>
        <begin position="406"/>
        <end position="426"/>
    </location>
</feature>
<feature type="helix" evidence="21">
    <location>
        <begin position="437"/>
        <end position="449"/>
    </location>
</feature>
<feature type="helix" evidence="21">
    <location>
        <begin position="453"/>
        <end position="466"/>
    </location>
</feature>
<feature type="helix" evidence="21">
    <location>
        <begin position="467"/>
        <end position="469"/>
    </location>
</feature>
<feature type="helix" evidence="21">
    <location>
        <begin position="473"/>
        <end position="491"/>
    </location>
</feature>
<feature type="strand" evidence="21">
    <location>
        <begin position="505"/>
        <end position="507"/>
    </location>
</feature>
<feature type="turn" evidence="21">
    <location>
        <begin position="509"/>
        <end position="511"/>
    </location>
</feature>
<feature type="helix" evidence="22">
    <location>
        <begin position="513"/>
        <end position="515"/>
    </location>
</feature>
<feature type="helix" evidence="21">
    <location>
        <begin position="528"/>
        <end position="538"/>
    </location>
</feature>
<feature type="helix" evidence="21">
    <location>
        <begin position="541"/>
        <end position="543"/>
    </location>
</feature>
<feature type="sequence conflict" description="In Ref. 2; BAE37202." evidence="15" ref="2">
    <original>C</original>
    <variation>Y</variation>
    <location sequence="Q8BND5-4">
        <position position="127"/>
    </location>
</feature>
<organism>
    <name type="scientific">Mus musculus</name>
    <name type="common">Mouse</name>
    <dbReference type="NCBI Taxonomy" id="10090"/>
    <lineage>
        <taxon>Eukaryota</taxon>
        <taxon>Metazoa</taxon>
        <taxon>Chordata</taxon>
        <taxon>Craniata</taxon>
        <taxon>Vertebrata</taxon>
        <taxon>Euteleostomi</taxon>
        <taxon>Mammalia</taxon>
        <taxon>Eutheria</taxon>
        <taxon>Euarchontoglires</taxon>
        <taxon>Glires</taxon>
        <taxon>Rodentia</taxon>
        <taxon>Myomorpha</taxon>
        <taxon>Muroidea</taxon>
        <taxon>Muridae</taxon>
        <taxon>Murinae</taxon>
        <taxon>Mus</taxon>
        <taxon>Mus</taxon>
    </lineage>
</organism>
<comment type="function">
    <text evidence="10">Catalyzes the oxidation of sulfhydryl groups in peptide and protein thiols to disulfides with the reduction of oxygen to hydrogen peroxide (PubMed:26819240). Plays a role in disulfide bond formation in a variety of extracellular proteins (PubMed:26819240). In fibroblasts, required for normal incorporation of laminin into the extracellular matrix, and thereby for normal cell-cell adhesion and cell migration (PubMed:26819240).</text>
</comment>
<comment type="catalytic activity">
    <reaction evidence="10">
        <text>2 R'C(R)SH + O2 = R'C(R)S-S(R)CR' + H2O2</text>
        <dbReference type="Rhea" id="RHEA:17357"/>
        <dbReference type="ChEBI" id="CHEBI:15379"/>
        <dbReference type="ChEBI" id="CHEBI:16240"/>
        <dbReference type="ChEBI" id="CHEBI:16520"/>
        <dbReference type="ChEBI" id="CHEBI:17412"/>
        <dbReference type="EC" id="1.8.3.2"/>
    </reaction>
</comment>
<comment type="cofactor">
    <cofactor evidence="9">
        <name>FAD</name>
        <dbReference type="ChEBI" id="CHEBI:57692"/>
    </cofactor>
    <text evidence="9">Binds 1 FAD per subunit.</text>
</comment>
<comment type="subunit">
    <text evidence="3">Monomer.</text>
</comment>
<comment type="subcellular location">
    <molecule>Isoform 1</molecule>
    <subcellularLocation>
        <location evidence="2">Golgi apparatus membrane</location>
        <topology evidence="2">Single-pass membrane protein</topology>
    </subcellularLocation>
    <subcellularLocation>
        <location evidence="10">Secreted</location>
    </subcellularLocation>
    <text evidence="2">A small proportion is secreted, probably via a proteolytic cleavage that removes the membrane anchor.</text>
</comment>
<comment type="subcellular location">
    <molecule>Isoform 2</molecule>
    <subcellularLocation>
        <location evidence="15">Secreted</location>
    </subcellularLocation>
</comment>
<comment type="subcellular location">
    <molecule>Isoform 3</molecule>
    <subcellularLocation>
        <location evidence="8">Secreted</location>
    </subcellularLocation>
</comment>
<comment type="subcellular location">
    <molecule>Isoform 4</molecule>
    <subcellularLocation>
        <location evidence="15">Secreted</location>
    </subcellularLocation>
</comment>
<comment type="alternative products">
    <event type="alternative splicing"/>
    <isoform>
        <id>Q8BND5-1</id>
        <name>1</name>
        <sequence type="displayed"/>
    </isoform>
    <isoform>
        <id>Q8BND5-2</id>
        <name>2</name>
        <sequence type="described" ref="VSP_020495 VSP_020496"/>
    </isoform>
    <isoform>
        <id>Q8BND5-3</id>
        <name>3</name>
        <sequence type="described" ref="VSP_020493 VSP_020494"/>
    </isoform>
    <isoform>
        <id>Q8BND5-4</id>
        <name>4</name>
        <sequence type="described" ref="VSP_020491 VSP_020492"/>
    </isoform>
</comment>
<comment type="tissue specificity">
    <text evidence="8">Detected in skin (at protein level) (PubMed:12354420). Expressed in the seminal vesicles and skin.</text>
</comment>
<comment type="PTM">
    <text evidence="2">N-glycosylated. O-glycosylated on Thr and Ser residues.</text>
</comment>
<comment type="similarity">
    <text evidence="15">Belongs to the quiescin-sulfhydryl oxidase (QSOX) family.</text>
</comment>
<gene>
    <name type="primary">Qsox1</name>
    <name type="synonym">Qscn6</name>
    <name type="synonym">Sox</name>
</gene>
<proteinExistence type="evidence at protein level"/>
<accession>Q8BND5</accession>
<accession>Q3TDY9</accession>
<accession>Q3TE19</accession>
<accession>Q3TR29</accession>
<accession>Q3UEL4</accession>
<accession>Q8K041</accession>
<accession>Q9DBL6</accession>
<evidence type="ECO:0000250" key="1"/>
<evidence type="ECO:0000250" key="2">
    <source>
        <dbReference type="UniProtKB" id="O00391"/>
    </source>
</evidence>
<evidence type="ECO:0000250" key="3">
    <source>
        <dbReference type="UniProtKB" id="Q6IUU3"/>
    </source>
</evidence>
<evidence type="ECO:0000255" key="4"/>
<evidence type="ECO:0000255" key="5">
    <source>
        <dbReference type="PROSITE-ProRule" id="PRU00654"/>
    </source>
</evidence>
<evidence type="ECO:0000255" key="6">
    <source>
        <dbReference type="PROSITE-ProRule" id="PRU00691"/>
    </source>
</evidence>
<evidence type="ECO:0000256" key="7">
    <source>
        <dbReference type="SAM" id="MobiDB-lite"/>
    </source>
</evidence>
<evidence type="ECO:0000269" key="8">
    <source>
    </source>
</evidence>
<evidence type="ECO:0000269" key="9">
    <source>
    </source>
</evidence>
<evidence type="ECO:0000269" key="10">
    <source>
    </source>
</evidence>
<evidence type="ECO:0000269" key="11">
    <source>
    </source>
</evidence>
<evidence type="ECO:0000303" key="12">
    <source>
    </source>
</evidence>
<evidence type="ECO:0000303" key="13">
    <source>
    </source>
</evidence>
<evidence type="ECO:0000303" key="14">
    <source>
    </source>
</evidence>
<evidence type="ECO:0000305" key="15"/>
<evidence type="ECO:0007744" key="16">
    <source>
        <dbReference type="PDB" id="3T58"/>
    </source>
</evidence>
<evidence type="ECO:0007744" key="17">
    <source>
        <dbReference type="PDB" id="3T59"/>
    </source>
</evidence>
<evidence type="ECO:0007744" key="18">
    <source>
        <dbReference type="PDB" id="5D8I"/>
    </source>
</evidence>
<evidence type="ECO:0007744" key="19">
    <source>
        <dbReference type="PDB" id="5D93"/>
    </source>
</evidence>
<evidence type="ECO:0007744" key="20">
    <source>
        <dbReference type="PDB" id="5D96"/>
    </source>
</evidence>
<evidence type="ECO:0007829" key="21">
    <source>
        <dbReference type="PDB" id="3T58"/>
    </source>
</evidence>
<evidence type="ECO:0007829" key="22">
    <source>
        <dbReference type="PDB" id="3T59"/>
    </source>
</evidence>
<evidence type="ECO:0007829" key="23">
    <source>
        <dbReference type="PDB" id="5D8I"/>
    </source>
</evidence>
<evidence type="ECO:0007829" key="24">
    <source>
        <dbReference type="PDB" id="6HF1"/>
    </source>
</evidence>
<keyword id="KW-0002">3D-structure</keyword>
<keyword id="KW-0025">Alternative splicing</keyword>
<keyword id="KW-1015">Disulfide bond</keyword>
<keyword id="KW-0274">FAD</keyword>
<keyword id="KW-0285">Flavoprotein</keyword>
<keyword id="KW-0325">Glycoprotein</keyword>
<keyword id="KW-0333">Golgi apparatus</keyword>
<keyword id="KW-0472">Membrane</keyword>
<keyword id="KW-0560">Oxidoreductase</keyword>
<keyword id="KW-1185">Reference proteome</keyword>
<keyword id="KW-0964">Secreted</keyword>
<keyword id="KW-0732">Signal</keyword>
<keyword id="KW-0812">Transmembrane</keyword>
<keyword id="KW-1133">Transmembrane helix</keyword>
<name>QSOX1_MOUSE</name>
<sequence>MRRCGRLSGPPSLLLLLLLLSPLLFSGPGAYAARLSVLYSSSDPLTLLDADSVRPTVLGSSSAWAVEFFASWCGHCIAFAPTWKELANDVKDWRPALNLAVLDCAEETNSAVCREFNIAGFPTVRFFQAFTKNGSGATLPGAGANVQTLRMRLIDALESHRDTWPPACPPLEPAKLNDIDGFFTRNKADYLALVFEREDSYLGREVTLDLSQYHAVAVRRVLNTESDLVNKFGVTDFPSCYLLLRNGSVSRVPVLVESRSFYTSYLRGLPGLTRDAPPTTATPVTADKIAPTVWKFADRSKIYMADLESALHYILRVEVGKFSVLEGQRLVALKKFVAVLAKYFPGQPLVQNFLHSINDWLQKQQKKRIPYSFFKAALDSRKEDAVLTEKVNWVGCQGSEPHFRGFPCSLWVLFHFLTVQANRYSEAHPQEPADGQEVLQAMRSYVQFFFGCRDCADHFEQMAAASMHQVRSPSNAILWLWTSHNRVNARLSGALSEDPHFPKVQWPPRELCSACHNELNGQVPLWDLGATLNFLKAHFSPANIVIDSSASRHTGRRGSPEATPELVMDTLKLESRNSVLGHEQAASAESPGATALDVPAEKPEASGPQELYTGLRMGGASPGQGPPERMEDHQRDMQENAPGQQHLSKRDTEALFLPEVNHLQGPLELRRGGRSPKQLAPILEEEPEALAIQGQGQWLQVLGGGISHLDISLCVGLYSVSFMGLLAMYTYFRARLRTPKGHASYPTA</sequence>
<dbReference type="EC" id="1.8.3.2" evidence="10"/>
<dbReference type="EMBL" id="AB044284">
    <property type="protein sequence ID" value="BAB21936.1"/>
    <property type="molecule type" value="mRNA"/>
</dbReference>
<dbReference type="EMBL" id="AK004880">
    <property type="protein sequence ID" value="BAB23638.1"/>
    <property type="molecule type" value="mRNA"/>
</dbReference>
<dbReference type="EMBL" id="AK083938">
    <property type="protein sequence ID" value="BAC39073.1"/>
    <property type="molecule type" value="mRNA"/>
</dbReference>
<dbReference type="EMBL" id="AK149465">
    <property type="protein sequence ID" value="BAE28897.1"/>
    <property type="molecule type" value="mRNA"/>
</dbReference>
<dbReference type="EMBL" id="AK163119">
    <property type="protein sequence ID" value="BAE37202.1"/>
    <property type="molecule type" value="mRNA"/>
</dbReference>
<dbReference type="EMBL" id="AK166839">
    <property type="protein sequence ID" value="BAE39061.1"/>
    <property type="molecule type" value="mRNA"/>
</dbReference>
<dbReference type="EMBL" id="AK169877">
    <property type="protein sequence ID" value="BAE41429.1"/>
    <property type="molecule type" value="mRNA"/>
</dbReference>
<dbReference type="EMBL" id="AK169920">
    <property type="protein sequence ID" value="BAE41459.1"/>
    <property type="molecule type" value="mRNA"/>
</dbReference>
<dbReference type="EMBL" id="AK170449">
    <property type="protein sequence ID" value="BAE41807.1"/>
    <property type="molecule type" value="mRNA"/>
</dbReference>
<dbReference type="EMBL" id="BC034131">
    <property type="protein sequence ID" value="AAH34131.1"/>
    <property type="molecule type" value="mRNA"/>
</dbReference>
<dbReference type="EMBL" id="BC076590">
    <property type="protein sequence ID" value="AAH76590.1"/>
    <property type="molecule type" value="mRNA"/>
</dbReference>
<dbReference type="CCDS" id="CCDS15386.1">
    <molecule id="Q8BND5-1"/>
</dbReference>
<dbReference type="CCDS" id="CCDS78713.1">
    <molecule id="Q8BND5-3"/>
</dbReference>
<dbReference type="RefSeq" id="NP_001020116.1">
    <molecule id="Q8BND5-1"/>
    <property type="nucleotide sequence ID" value="NM_001024945.1"/>
</dbReference>
<dbReference type="RefSeq" id="NP_075757.1">
    <molecule id="Q8BND5-3"/>
    <property type="nucleotide sequence ID" value="NM_023268.2"/>
</dbReference>
<dbReference type="PDB" id="3T58">
    <property type="method" value="X-ray"/>
    <property type="resolution" value="2.40 A"/>
    <property type="chains" value="A/B/C/D=36-550"/>
</dbReference>
<dbReference type="PDB" id="3T59">
    <property type="method" value="X-ray"/>
    <property type="resolution" value="2.80 A"/>
    <property type="chains" value="A/B/C/D=36-550"/>
</dbReference>
<dbReference type="PDB" id="5D8I">
    <property type="method" value="X-ray"/>
    <property type="resolution" value="2.05 A"/>
    <property type="chains" value="A/B=36-275"/>
</dbReference>
<dbReference type="PDB" id="5D93">
    <property type="method" value="X-ray"/>
    <property type="resolution" value="2.20 A"/>
    <property type="chains" value="A/D=36-275"/>
</dbReference>
<dbReference type="PDB" id="5D96">
    <property type="method" value="X-ray"/>
    <property type="resolution" value="2.30 A"/>
    <property type="chains" value="A/D=36-275"/>
</dbReference>
<dbReference type="PDB" id="6HF1">
    <property type="method" value="X-ray"/>
    <property type="resolution" value="1.94 A"/>
    <property type="chains" value="A/D=37-274"/>
</dbReference>
<dbReference type="PDBsum" id="3T58"/>
<dbReference type="PDBsum" id="3T59"/>
<dbReference type="PDBsum" id="5D8I"/>
<dbReference type="PDBsum" id="5D93"/>
<dbReference type="PDBsum" id="5D96"/>
<dbReference type="PDBsum" id="6HF1"/>
<dbReference type="SMR" id="Q8BND5"/>
<dbReference type="BioGRID" id="222277">
    <property type="interactions" value="1"/>
</dbReference>
<dbReference type="FunCoup" id="Q8BND5">
    <property type="interactions" value="292"/>
</dbReference>
<dbReference type="STRING" id="10090.ENSMUSP00000035658"/>
<dbReference type="GlyCosmos" id="Q8BND5">
    <property type="glycosylation" value="2 sites, No reported glycans"/>
</dbReference>
<dbReference type="GlyGen" id="Q8BND5">
    <property type="glycosylation" value="3 sites, 1 N-linked glycan (1 site)"/>
</dbReference>
<dbReference type="iPTMnet" id="Q8BND5"/>
<dbReference type="PhosphoSitePlus" id="Q8BND5"/>
<dbReference type="SwissPalm" id="Q8BND5"/>
<dbReference type="CPTAC" id="non-CPTAC-3297"/>
<dbReference type="jPOST" id="Q8BND5"/>
<dbReference type="PaxDb" id="10090-ENSMUSP00000035658"/>
<dbReference type="PeptideAtlas" id="Q8BND5"/>
<dbReference type="ProteomicsDB" id="300336">
    <molecule id="Q8BND5-1"/>
</dbReference>
<dbReference type="ProteomicsDB" id="300337">
    <molecule id="Q8BND5-2"/>
</dbReference>
<dbReference type="ProteomicsDB" id="300338">
    <molecule id="Q8BND5-3"/>
</dbReference>
<dbReference type="ProteomicsDB" id="300339">
    <molecule id="Q8BND5-4"/>
</dbReference>
<dbReference type="Pumba" id="Q8BND5"/>
<dbReference type="ABCD" id="Q8BND5">
    <property type="antibodies" value="2 sequenced antibodies"/>
</dbReference>
<dbReference type="Antibodypedia" id="47086">
    <property type="antibodies" value="212 antibodies from 34 providers"/>
</dbReference>
<dbReference type="DNASU" id="104009"/>
<dbReference type="Ensembl" id="ENSMUST00000035325.15">
    <molecule id="Q8BND5-1"/>
    <property type="protein sequence ID" value="ENSMUSP00000035658.9"/>
    <property type="gene ID" value="ENSMUSG00000033684.15"/>
</dbReference>
<dbReference type="Ensembl" id="ENSMUST00000111764.8">
    <molecule id="Q8BND5-2"/>
    <property type="protein sequence ID" value="ENSMUSP00000107394.3"/>
    <property type="gene ID" value="ENSMUSG00000033684.15"/>
</dbReference>
<dbReference type="Ensembl" id="ENSMUST00000194632.2">
    <molecule id="Q8BND5-3"/>
    <property type="protein sequence ID" value="ENSMUSP00000142301.2"/>
    <property type="gene ID" value="ENSMUSG00000033684.15"/>
</dbReference>
<dbReference type="GeneID" id="104009"/>
<dbReference type="KEGG" id="mmu:104009"/>
<dbReference type="UCSC" id="uc007dbo.1">
    <molecule id="Q8BND5-3"/>
    <property type="organism name" value="mouse"/>
</dbReference>
<dbReference type="UCSC" id="uc007dbp.1">
    <molecule id="Q8BND5-1"/>
    <property type="organism name" value="mouse"/>
</dbReference>
<dbReference type="UCSC" id="uc007dbq.1">
    <molecule id="Q8BND5-4"/>
    <property type="organism name" value="mouse"/>
</dbReference>
<dbReference type="UCSC" id="uc011wtx.1">
    <molecule id="Q8BND5-2"/>
    <property type="organism name" value="mouse"/>
</dbReference>
<dbReference type="AGR" id="MGI:1330818"/>
<dbReference type="CTD" id="5768"/>
<dbReference type="MGI" id="MGI:1330818">
    <property type="gene designation" value="Qsox1"/>
</dbReference>
<dbReference type="VEuPathDB" id="HostDB:ENSMUSG00000033684"/>
<dbReference type="eggNOG" id="KOG1731">
    <property type="taxonomic scope" value="Eukaryota"/>
</dbReference>
<dbReference type="GeneTree" id="ENSGT00940000159504"/>
<dbReference type="HOGENOM" id="CLU_020182_1_0_1"/>
<dbReference type="InParanoid" id="Q8BND5"/>
<dbReference type="OMA" id="YGELWNE"/>
<dbReference type="OrthoDB" id="59470at2759"/>
<dbReference type="PhylomeDB" id="Q8BND5"/>
<dbReference type="TreeFam" id="TF316749"/>
<dbReference type="BRENDA" id="1.8.3.2">
    <property type="organism ID" value="3474"/>
</dbReference>
<dbReference type="Reactome" id="R-MMU-114608">
    <property type="pathway name" value="Platelet degranulation"/>
</dbReference>
<dbReference type="Reactome" id="R-MMU-381426">
    <property type="pathway name" value="Regulation of Insulin-like Growth Factor (IGF) transport and uptake by Insulin-like Growth Factor Binding Proteins (IGFBPs)"/>
</dbReference>
<dbReference type="Reactome" id="R-MMU-6798695">
    <property type="pathway name" value="Neutrophil degranulation"/>
</dbReference>
<dbReference type="Reactome" id="R-MMU-8957275">
    <property type="pathway name" value="Post-translational protein phosphorylation"/>
</dbReference>
<dbReference type="BioGRID-ORCS" id="104009">
    <property type="hits" value="1 hit in 79 CRISPR screens"/>
</dbReference>
<dbReference type="ChiTaRS" id="Qsox1">
    <property type="organism name" value="mouse"/>
</dbReference>
<dbReference type="EvolutionaryTrace" id="Q8BND5"/>
<dbReference type="PRO" id="PR:Q8BND5"/>
<dbReference type="Proteomes" id="UP000000589">
    <property type="component" value="Chromosome 1"/>
</dbReference>
<dbReference type="RNAct" id="Q8BND5">
    <property type="molecule type" value="protein"/>
</dbReference>
<dbReference type="Bgee" id="ENSMUSG00000033684">
    <property type="expression patterns" value="Expressed in seminal vesicle and 205 other cell types or tissues"/>
</dbReference>
<dbReference type="GO" id="GO:0005783">
    <property type="term" value="C:endoplasmic reticulum"/>
    <property type="evidence" value="ECO:0000266"/>
    <property type="project" value="MGI"/>
</dbReference>
<dbReference type="GO" id="GO:0070062">
    <property type="term" value="C:extracellular exosome"/>
    <property type="evidence" value="ECO:0007669"/>
    <property type="project" value="Ensembl"/>
</dbReference>
<dbReference type="GO" id="GO:0005615">
    <property type="term" value="C:extracellular space"/>
    <property type="evidence" value="ECO:0007005"/>
    <property type="project" value="BHF-UCL"/>
</dbReference>
<dbReference type="GO" id="GO:0005794">
    <property type="term" value="C:Golgi apparatus"/>
    <property type="evidence" value="ECO:0000266"/>
    <property type="project" value="MGI"/>
</dbReference>
<dbReference type="GO" id="GO:0000139">
    <property type="term" value="C:Golgi membrane"/>
    <property type="evidence" value="ECO:0000250"/>
    <property type="project" value="UniProtKB"/>
</dbReference>
<dbReference type="GO" id="GO:0071949">
    <property type="term" value="F:FAD binding"/>
    <property type="evidence" value="ECO:0007669"/>
    <property type="project" value="Ensembl"/>
</dbReference>
<dbReference type="GO" id="GO:0016971">
    <property type="term" value="F:flavin-dependent sulfhydryl oxidase activity"/>
    <property type="evidence" value="ECO:0000250"/>
    <property type="project" value="UniProtKB"/>
</dbReference>
<dbReference type="GO" id="GO:0003756">
    <property type="term" value="F:protein disulfide isomerase activity"/>
    <property type="evidence" value="ECO:0000250"/>
    <property type="project" value="UniProtKB"/>
</dbReference>
<dbReference type="GO" id="GO:0085029">
    <property type="term" value="P:extracellular matrix assembly"/>
    <property type="evidence" value="ECO:0007669"/>
    <property type="project" value="Ensembl"/>
</dbReference>
<dbReference type="GO" id="GO:0016242">
    <property type="term" value="P:negative regulation of macroautophagy"/>
    <property type="evidence" value="ECO:0007669"/>
    <property type="project" value="Ensembl"/>
</dbReference>
<dbReference type="CDD" id="cd02992">
    <property type="entry name" value="PDI_a_QSOX"/>
    <property type="match status" value="1"/>
</dbReference>
<dbReference type="FunFam" id="1.20.120.1960:FF:000001">
    <property type="entry name" value="Sulfhydryl oxidase"/>
    <property type="match status" value="1"/>
</dbReference>
<dbReference type="FunFam" id="1.20.120.310:FF:000001">
    <property type="entry name" value="Sulfhydryl oxidase"/>
    <property type="match status" value="1"/>
</dbReference>
<dbReference type="FunFam" id="3.40.30.10:FF:000073">
    <property type="entry name" value="Sulfhydryl oxidase"/>
    <property type="match status" value="1"/>
</dbReference>
<dbReference type="FunFam" id="3.40.30.10:FF:000080">
    <property type="entry name" value="Sulfhydryl oxidase"/>
    <property type="match status" value="1"/>
</dbReference>
<dbReference type="Gene3D" id="1.20.120.310">
    <property type="entry name" value="ERV/ALR sulfhydryl oxidase domain"/>
    <property type="match status" value="1"/>
</dbReference>
<dbReference type="Gene3D" id="3.40.30.10">
    <property type="entry name" value="Glutaredoxin"/>
    <property type="match status" value="2"/>
</dbReference>
<dbReference type="Gene3D" id="1.20.120.1960">
    <property type="entry name" value="QSOX sulfhydryl oxidase domain"/>
    <property type="match status" value="1"/>
</dbReference>
<dbReference type="InterPro" id="IPR036774">
    <property type="entry name" value="ERV/ALR_sulphydryl_oxid_sf"/>
</dbReference>
<dbReference type="InterPro" id="IPR017905">
    <property type="entry name" value="ERV/ALR_sulphydryl_oxidase"/>
</dbReference>
<dbReference type="InterPro" id="IPR040986">
    <property type="entry name" value="QSOX_FAD-bd_dom"/>
</dbReference>
<dbReference type="InterPro" id="IPR042568">
    <property type="entry name" value="QSOX_FAD-bd_sf"/>
</dbReference>
<dbReference type="InterPro" id="IPR041269">
    <property type="entry name" value="QSOX_Trx1"/>
</dbReference>
<dbReference type="InterPro" id="IPR039798">
    <property type="entry name" value="Sulfhydryl_oxidase"/>
</dbReference>
<dbReference type="InterPro" id="IPR036249">
    <property type="entry name" value="Thioredoxin-like_sf"/>
</dbReference>
<dbReference type="InterPro" id="IPR013766">
    <property type="entry name" value="Thioredoxin_domain"/>
</dbReference>
<dbReference type="PANTHER" id="PTHR22897">
    <property type="entry name" value="QUIESCIN Q6-RELATED SULFHYDRYL OXIDASE"/>
    <property type="match status" value="1"/>
</dbReference>
<dbReference type="PANTHER" id="PTHR22897:SF6">
    <property type="entry name" value="SULFHYDRYL OXIDASE 1"/>
    <property type="match status" value="1"/>
</dbReference>
<dbReference type="Pfam" id="PF04777">
    <property type="entry name" value="Evr1_Alr"/>
    <property type="match status" value="1"/>
</dbReference>
<dbReference type="Pfam" id="PF18371">
    <property type="entry name" value="FAD_SOX"/>
    <property type="match status" value="1"/>
</dbReference>
<dbReference type="Pfam" id="PF18108">
    <property type="entry name" value="QSOX_Trx1"/>
    <property type="match status" value="1"/>
</dbReference>
<dbReference type="Pfam" id="PF00085">
    <property type="entry name" value="Thioredoxin"/>
    <property type="match status" value="1"/>
</dbReference>
<dbReference type="SUPFAM" id="SSF69000">
    <property type="entry name" value="FAD-dependent thiol oxidase"/>
    <property type="match status" value="1"/>
</dbReference>
<dbReference type="SUPFAM" id="SSF52833">
    <property type="entry name" value="Thioredoxin-like"/>
    <property type="match status" value="1"/>
</dbReference>
<dbReference type="PROSITE" id="PS51324">
    <property type="entry name" value="ERV_ALR"/>
    <property type="match status" value="1"/>
</dbReference>
<dbReference type="PROSITE" id="PS51352">
    <property type="entry name" value="THIOREDOXIN_2"/>
    <property type="match status" value="1"/>
</dbReference>
<reference key="1">
    <citation type="journal article" date="2002" name="J. Dermatol. Sci.">
        <title>Sulfhydryl oxidase (SOx) from mouse epidermis: molecular cloning, nucleotide sequence, and expression of recombinant protein in the cultured cells.</title>
        <authorList>
            <person name="Matsuba S."/>
            <person name="Suga Y."/>
            <person name="Ishidoh K."/>
            <person name="Hashimoto Y."/>
            <person name="Takamori K."/>
            <person name="Kominami E."/>
            <person name="Wilhelm B."/>
            <person name="Seitz J."/>
            <person name="Ogawa H."/>
        </authorList>
    </citation>
    <scope>NUCLEOTIDE SEQUENCE [MRNA] (ISOFORM 3)</scope>
    <scope>SUBCELLULAR LOCATION (ISOFORM 3)</scope>
    <scope>TISSUE SPECIFICITY</scope>
</reference>
<reference key="2">
    <citation type="journal article" date="2005" name="Science">
        <title>The transcriptional landscape of the mammalian genome.</title>
        <authorList>
            <person name="Carninci P."/>
            <person name="Kasukawa T."/>
            <person name="Katayama S."/>
            <person name="Gough J."/>
            <person name="Frith M.C."/>
            <person name="Maeda N."/>
            <person name="Oyama R."/>
            <person name="Ravasi T."/>
            <person name="Lenhard B."/>
            <person name="Wells C."/>
            <person name="Kodzius R."/>
            <person name="Shimokawa K."/>
            <person name="Bajic V.B."/>
            <person name="Brenner S.E."/>
            <person name="Batalov S."/>
            <person name="Forrest A.R."/>
            <person name="Zavolan M."/>
            <person name="Davis M.J."/>
            <person name="Wilming L.G."/>
            <person name="Aidinis V."/>
            <person name="Allen J.E."/>
            <person name="Ambesi-Impiombato A."/>
            <person name="Apweiler R."/>
            <person name="Aturaliya R.N."/>
            <person name="Bailey T.L."/>
            <person name="Bansal M."/>
            <person name="Baxter L."/>
            <person name="Beisel K.W."/>
            <person name="Bersano T."/>
            <person name="Bono H."/>
            <person name="Chalk A.M."/>
            <person name="Chiu K.P."/>
            <person name="Choudhary V."/>
            <person name="Christoffels A."/>
            <person name="Clutterbuck D.R."/>
            <person name="Crowe M.L."/>
            <person name="Dalla E."/>
            <person name="Dalrymple B.P."/>
            <person name="de Bono B."/>
            <person name="Della Gatta G."/>
            <person name="di Bernardo D."/>
            <person name="Down T."/>
            <person name="Engstrom P."/>
            <person name="Fagiolini M."/>
            <person name="Faulkner G."/>
            <person name="Fletcher C.F."/>
            <person name="Fukushima T."/>
            <person name="Furuno M."/>
            <person name="Futaki S."/>
            <person name="Gariboldi M."/>
            <person name="Georgii-Hemming P."/>
            <person name="Gingeras T.R."/>
            <person name="Gojobori T."/>
            <person name="Green R.E."/>
            <person name="Gustincich S."/>
            <person name="Harbers M."/>
            <person name="Hayashi Y."/>
            <person name="Hensch T.K."/>
            <person name="Hirokawa N."/>
            <person name="Hill D."/>
            <person name="Huminiecki L."/>
            <person name="Iacono M."/>
            <person name="Ikeo K."/>
            <person name="Iwama A."/>
            <person name="Ishikawa T."/>
            <person name="Jakt M."/>
            <person name="Kanapin A."/>
            <person name="Katoh M."/>
            <person name="Kawasawa Y."/>
            <person name="Kelso J."/>
            <person name="Kitamura H."/>
            <person name="Kitano H."/>
            <person name="Kollias G."/>
            <person name="Krishnan S.P."/>
            <person name="Kruger A."/>
            <person name="Kummerfeld S.K."/>
            <person name="Kurochkin I.V."/>
            <person name="Lareau L.F."/>
            <person name="Lazarevic D."/>
            <person name="Lipovich L."/>
            <person name="Liu J."/>
            <person name="Liuni S."/>
            <person name="McWilliam S."/>
            <person name="Madan Babu M."/>
            <person name="Madera M."/>
            <person name="Marchionni L."/>
            <person name="Matsuda H."/>
            <person name="Matsuzawa S."/>
            <person name="Miki H."/>
            <person name="Mignone F."/>
            <person name="Miyake S."/>
            <person name="Morris K."/>
            <person name="Mottagui-Tabar S."/>
            <person name="Mulder N."/>
            <person name="Nakano N."/>
            <person name="Nakauchi H."/>
            <person name="Ng P."/>
            <person name="Nilsson R."/>
            <person name="Nishiguchi S."/>
            <person name="Nishikawa S."/>
            <person name="Nori F."/>
            <person name="Ohara O."/>
            <person name="Okazaki Y."/>
            <person name="Orlando V."/>
            <person name="Pang K.C."/>
            <person name="Pavan W.J."/>
            <person name="Pavesi G."/>
            <person name="Pesole G."/>
            <person name="Petrovsky N."/>
            <person name="Piazza S."/>
            <person name="Reed J."/>
            <person name="Reid J.F."/>
            <person name="Ring B.Z."/>
            <person name="Ringwald M."/>
            <person name="Rost B."/>
            <person name="Ruan Y."/>
            <person name="Salzberg S.L."/>
            <person name="Sandelin A."/>
            <person name="Schneider C."/>
            <person name="Schoenbach C."/>
            <person name="Sekiguchi K."/>
            <person name="Semple C.A."/>
            <person name="Seno S."/>
            <person name="Sessa L."/>
            <person name="Sheng Y."/>
            <person name="Shibata Y."/>
            <person name="Shimada H."/>
            <person name="Shimada K."/>
            <person name="Silva D."/>
            <person name="Sinclair B."/>
            <person name="Sperling S."/>
            <person name="Stupka E."/>
            <person name="Sugiura K."/>
            <person name="Sultana R."/>
            <person name="Takenaka Y."/>
            <person name="Taki K."/>
            <person name="Tammoja K."/>
            <person name="Tan S.L."/>
            <person name="Tang S."/>
            <person name="Taylor M.S."/>
            <person name="Tegner J."/>
            <person name="Teichmann S.A."/>
            <person name="Ueda H.R."/>
            <person name="van Nimwegen E."/>
            <person name="Verardo R."/>
            <person name="Wei C.L."/>
            <person name="Yagi K."/>
            <person name="Yamanishi H."/>
            <person name="Zabarovsky E."/>
            <person name="Zhu S."/>
            <person name="Zimmer A."/>
            <person name="Hide W."/>
            <person name="Bult C."/>
            <person name="Grimmond S.M."/>
            <person name="Teasdale R.D."/>
            <person name="Liu E.T."/>
            <person name="Brusic V."/>
            <person name="Quackenbush J."/>
            <person name="Wahlestedt C."/>
            <person name="Mattick J.S."/>
            <person name="Hume D.A."/>
            <person name="Kai C."/>
            <person name="Sasaki D."/>
            <person name="Tomaru Y."/>
            <person name="Fukuda S."/>
            <person name="Kanamori-Katayama M."/>
            <person name="Suzuki M."/>
            <person name="Aoki J."/>
            <person name="Arakawa T."/>
            <person name="Iida J."/>
            <person name="Imamura K."/>
            <person name="Itoh M."/>
            <person name="Kato T."/>
            <person name="Kawaji H."/>
            <person name="Kawagashira N."/>
            <person name="Kawashima T."/>
            <person name="Kojima M."/>
            <person name="Kondo S."/>
            <person name="Konno H."/>
            <person name="Nakano K."/>
            <person name="Ninomiya N."/>
            <person name="Nishio T."/>
            <person name="Okada M."/>
            <person name="Plessy C."/>
            <person name="Shibata K."/>
            <person name="Shiraki T."/>
            <person name="Suzuki S."/>
            <person name="Tagami M."/>
            <person name="Waki K."/>
            <person name="Watahiki A."/>
            <person name="Okamura-Oho Y."/>
            <person name="Suzuki H."/>
            <person name="Kawai J."/>
            <person name="Hayashizaki Y."/>
        </authorList>
    </citation>
    <scope>NUCLEOTIDE SEQUENCE [LARGE SCALE MRNA] (ISOFORMS 1; 2; 3 AND 4)</scope>
    <source>
        <strain>C57BL/6J</strain>
        <strain>NOD</strain>
        <tissue>Cerebellum</tissue>
        <tissue>Liver</tissue>
        <tissue>Spinal ganglion</tissue>
    </source>
</reference>
<reference key="3">
    <citation type="journal article" date="2004" name="Genome Res.">
        <title>The status, quality, and expansion of the NIH full-length cDNA project: the Mammalian Gene Collection (MGC).</title>
        <authorList>
            <consortium name="The MGC Project Team"/>
        </authorList>
    </citation>
    <scope>NUCLEOTIDE SEQUENCE [LARGE SCALE MRNA] (ISOFORM 1)</scope>
    <scope>NUCLEOTIDE SEQUENCE [LARGE SCALE MRNA] OF 137-538 (ISOFORM 3)</scope>
    <source>
        <strain>C57BL/6J</strain>
        <strain>FVB/N</strain>
        <tissue>Eye</tissue>
        <tissue>Salivary gland</tissue>
    </source>
</reference>
<reference key="4">
    <citation type="journal article" date="2010" name="Cell">
        <title>A tissue-specific atlas of mouse protein phosphorylation and expression.</title>
        <authorList>
            <person name="Huttlin E.L."/>
            <person name="Jedrychowski M.P."/>
            <person name="Elias J.E."/>
            <person name="Goswami T."/>
            <person name="Rad R."/>
            <person name="Beausoleil S.A."/>
            <person name="Villen J."/>
            <person name="Haas W."/>
            <person name="Sowa M.E."/>
            <person name="Gygi S.P."/>
        </authorList>
    </citation>
    <scope>IDENTIFICATION BY MASS SPECTROMETRY [LARGE SCALE ANALYSIS]</scope>
    <source>
        <tissue>Brown adipose tissue</tissue>
        <tissue>Heart</tissue>
        <tissue>Kidney</tissue>
        <tissue>Liver</tissue>
        <tissue>Lung</tissue>
        <tissue>Pancreas</tissue>
        <tissue>Testis</tissue>
    </source>
</reference>
<reference evidence="16 17" key="5">
    <citation type="journal article" date="2012" name="Nature">
        <title>The dynamic disulphide relay of quiescin sulphydryl oxidase.</title>
        <authorList>
            <person name="Alon A."/>
            <person name="Grossman I."/>
            <person name="Gat Y."/>
            <person name="Kodali V.K."/>
            <person name="DiMaio F."/>
            <person name="Mehlman T."/>
            <person name="Haran G."/>
            <person name="Baker D."/>
            <person name="Thorpe C."/>
            <person name="Fass D."/>
        </authorList>
    </citation>
    <scope>X-RAY CRYSTALLOGRAPHY (2.40 ANGSTROMS) OF 36-550 IN COMPLEX WITH FAD</scope>
    <scope>COFACTOR</scope>
    <scope>DISULFIDE BONDS</scope>
</reference>
<reference evidence="18 19 20" key="6">
    <citation type="journal article" date="2016" name="Protein Eng. Des. Sel.">
        <title>Overcoming a species-specificity barrier in development of an inhibitory antibody targeting a modulator of tumor stroma.</title>
        <authorList>
            <person name="Grossman I."/>
            <person name="Ilani T."/>
            <person name="Fleishman S.J."/>
            <person name="Fass D."/>
        </authorList>
    </citation>
    <scope>X-RAY CRYSTALLOGRAPHY (2.05 ANGSTROMS) OF 36-275</scope>
    <scope>FUNCTION</scope>
    <scope>CATALYTIC ACTIVITY</scope>
    <scope>SUBCELLULAR LOCATION</scope>
    <scope>DISULFIDE BONDS</scope>
</reference>
<reference key="7">
    <citation type="journal article" date="2019" name="Protein Sci.">
        <title>cis-Proline mutants of quiescin sulfhydryl oxidase 1 with altered redox properties undermine extracellular matrix integrity and cell adhesion in fibroblast cultures.</title>
        <authorList>
            <person name="Javitt G."/>
            <person name="Grossman-Haham I."/>
            <person name="Alon A."/>
            <person name="Resnick E."/>
            <person name="Mutsafi Y."/>
            <person name="Ilani T."/>
            <person name="Fass D."/>
        </authorList>
    </citation>
    <scope>X-RAY CRYSTALLOGRAPHY (1.94 ANGSTROMS) OF 36-550 OF MUTANT ALA-75/THR-122</scope>
    <scope>MUTAGENESIS OF HIS-75 AND PRO-122</scope>
</reference>